<sequence length="413" mass="46662">MKIYLVGGAVRDQLLNIPIKDRDYMVVGATVQEMLDKGYRQVGKDFPVFLHPKTQQEYALARTERKTGVGYGGFSVYAAPDVTLEEDLLRRDLTINAIAQDETGRVFDPYGGQADIEQRLLRHVSDAFVEDPLRVLRVARFAARFQPLGFKVAPETMALMQRIAASGELEALTPERVFQELDKALSTEAPQVFFEVLREAGGLAILFPEIEALFGIPQPEQWHPEIDTGIHTLMVLEQAARLSQDKQVRFAALVHDLGKALSPKEHLPKHHGHGQKGLPLIRALCERFRVPNDYRDLALLVSDQHQNIHNAFELRAETMVKLFDKADLWRKPERLPQLLLACEADCKGRTGLKERPYPQGAYVQHCFELARNVAIKPIIEAGFKGAEIKAQLHKQRVEVIDQYKRKTAVNAKP</sequence>
<dbReference type="EC" id="2.7.7.72" evidence="1"/>
<dbReference type="EC" id="3.1.3.-" evidence="1"/>
<dbReference type="EC" id="3.1.4.-" evidence="1"/>
<dbReference type="EMBL" id="CP000606">
    <property type="protein sequence ID" value="ABO22879.1"/>
    <property type="molecule type" value="Genomic_DNA"/>
</dbReference>
<dbReference type="RefSeq" id="WP_011864812.1">
    <property type="nucleotide sequence ID" value="NC_009092.1"/>
</dbReference>
<dbReference type="SMR" id="A3QBN1"/>
<dbReference type="STRING" id="323850.Shew_1008"/>
<dbReference type="KEGG" id="slo:Shew_1008"/>
<dbReference type="eggNOG" id="COG0617">
    <property type="taxonomic scope" value="Bacteria"/>
</dbReference>
<dbReference type="HOGENOM" id="CLU_015961_1_1_6"/>
<dbReference type="OrthoDB" id="9805698at2"/>
<dbReference type="Proteomes" id="UP000001558">
    <property type="component" value="Chromosome"/>
</dbReference>
<dbReference type="GO" id="GO:0005524">
    <property type="term" value="F:ATP binding"/>
    <property type="evidence" value="ECO:0007669"/>
    <property type="project" value="UniProtKB-UniRule"/>
</dbReference>
<dbReference type="GO" id="GO:0004810">
    <property type="term" value="F:CCA tRNA nucleotidyltransferase activity"/>
    <property type="evidence" value="ECO:0007669"/>
    <property type="project" value="UniProtKB-UniRule"/>
</dbReference>
<dbReference type="GO" id="GO:0004112">
    <property type="term" value="F:cyclic-nucleotide phosphodiesterase activity"/>
    <property type="evidence" value="ECO:0007669"/>
    <property type="project" value="UniProtKB-UniRule"/>
</dbReference>
<dbReference type="GO" id="GO:0000287">
    <property type="term" value="F:magnesium ion binding"/>
    <property type="evidence" value="ECO:0007669"/>
    <property type="project" value="UniProtKB-UniRule"/>
</dbReference>
<dbReference type="GO" id="GO:0016791">
    <property type="term" value="F:phosphatase activity"/>
    <property type="evidence" value="ECO:0007669"/>
    <property type="project" value="UniProtKB-UniRule"/>
</dbReference>
<dbReference type="GO" id="GO:0000049">
    <property type="term" value="F:tRNA binding"/>
    <property type="evidence" value="ECO:0007669"/>
    <property type="project" value="UniProtKB-UniRule"/>
</dbReference>
<dbReference type="GO" id="GO:0042245">
    <property type="term" value="P:RNA repair"/>
    <property type="evidence" value="ECO:0007669"/>
    <property type="project" value="UniProtKB-KW"/>
</dbReference>
<dbReference type="GO" id="GO:0001680">
    <property type="term" value="P:tRNA 3'-terminal CCA addition"/>
    <property type="evidence" value="ECO:0007669"/>
    <property type="project" value="UniProtKB-UniRule"/>
</dbReference>
<dbReference type="CDD" id="cd00077">
    <property type="entry name" value="HDc"/>
    <property type="match status" value="1"/>
</dbReference>
<dbReference type="CDD" id="cd05398">
    <property type="entry name" value="NT_ClassII-CCAase"/>
    <property type="match status" value="1"/>
</dbReference>
<dbReference type="FunFam" id="1.10.3090.10:FF:000001">
    <property type="entry name" value="Multifunctional CCA protein"/>
    <property type="match status" value="1"/>
</dbReference>
<dbReference type="Gene3D" id="3.30.460.10">
    <property type="entry name" value="Beta Polymerase, domain 2"/>
    <property type="match status" value="1"/>
</dbReference>
<dbReference type="Gene3D" id="1.10.3090.10">
    <property type="entry name" value="cca-adding enzyme, domain 2"/>
    <property type="match status" value="1"/>
</dbReference>
<dbReference type="HAMAP" id="MF_01261">
    <property type="entry name" value="CCA_bact_type1"/>
    <property type="match status" value="1"/>
</dbReference>
<dbReference type="HAMAP" id="MF_01262">
    <property type="entry name" value="CCA_bact_type2"/>
    <property type="match status" value="1"/>
</dbReference>
<dbReference type="InterPro" id="IPR012006">
    <property type="entry name" value="CCA_bact"/>
</dbReference>
<dbReference type="InterPro" id="IPR003607">
    <property type="entry name" value="HD/PDEase_dom"/>
</dbReference>
<dbReference type="InterPro" id="IPR006674">
    <property type="entry name" value="HD_domain"/>
</dbReference>
<dbReference type="InterPro" id="IPR043519">
    <property type="entry name" value="NT_sf"/>
</dbReference>
<dbReference type="InterPro" id="IPR002646">
    <property type="entry name" value="PolA_pol_head_dom"/>
</dbReference>
<dbReference type="InterPro" id="IPR032828">
    <property type="entry name" value="PolyA_RNA-bd"/>
</dbReference>
<dbReference type="InterPro" id="IPR050124">
    <property type="entry name" value="tRNA_CCA-adding_enzyme"/>
</dbReference>
<dbReference type="NCBIfam" id="NF008137">
    <property type="entry name" value="PRK10885.1"/>
    <property type="match status" value="1"/>
</dbReference>
<dbReference type="PANTHER" id="PTHR47545">
    <property type="entry name" value="MULTIFUNCTIONAL CCA PROTEIN"/>
    <property type="match status" value="1"/>
</dbReference>
<dbReference type="PANTHER" id="PTHR47545:SF1">
    <property type="entry name" value="MULTIFUNCTIONAL CCA PROTEIN"/>
    <property type="match status" value="1"/>
</dbReference>
<dbReference type="Pfam" id="PF01966">
    <property type="entry name" value="HD"/>
    <property type="match status" value="1"/>
</dbReference>
<dbReference type="Pfam" id="PF01743">
    <property type="entry name" value="PolyA_pol"/>
    <property type="match status" value="1"/>
</dbReference>
<dbReference type="Pfam" id="PF12627">
    <property type="entry name" value="PolyA_pol_RNAbd"/>
    <property type="match status" value="1"/>
</dbReference>
<dbReference type="PIRSF" id="PIRSF000813">
    <property type="entry name" value="CCA_bact"/>
    <property type="match status" value="1"/>
</dbReference>
<dbReference type="SUPFAM" id="SSF81301">
    <property type="entry name" value="Nucleotidyltransferase"/>
    <property type="match status" value="1"/>
</dbReference>
<dbReference type="SUPFAM" id="SSF81891">
    <property type="entry name" value="Poly A polymerase C-terminal region-like"/>
    <property type="match status" value="1"/>
</dbReference>
<dbReference type="PROSITE" id="PS51831">
    <property type="entry name" value="HD"/>
    <property type="match status" value="1"/>
</dbReference>
<feature type="chain" id="PRO_1000054295" description="Multifunctional CCA protein">
    <location>
        <begin position="1"/>
        <end position="413"/>
    </location>
</feature>
<feature type="domain" description="HD" evidence="1">
    <location>
        <begin position="228"/>
        <end position="329"/>
    </location>
</feature>
<feature type="binding site" evidence="1">
    <location>
        <position position="8"/>
    </location>
    <ligand>
        <name>ATP</name>
        <dbReference type="ChEBI" id="CHEBI:30616"/>
    </ligand>
</feature>
<feature type="binding site" evidence="1">
    <location>
        <position position="8"/>
    </location>
    <ligand>
        <name>CTP</name>
        <dbReference type="ChEBI" id="CHEBI:37563"/>
    </ligand>
</feature>
<feature type="binding site" evidence="1">
    <location>
        <position position="11"/>
    </location>
    <ligand>
        <name>ATP</name>
        <dbReference type="ChEBI" id="CHEBI:30616"/>
    </ligand>
</feature>
<feature type="binding site" evidence="1">
    <location>
        <position position="11"/>
    </location>
    <ligand>
        <name>CTP</name>
        <dbReference type="ChEBI" id="CHEBI:37563"/>
    </ligand>
</feature>
<feature type="binding site" evidence="1">
    <location>
        <position position="21"/>
    </location>
    <ligand>
        <name>Mg(2+)</name>
        <dbReference type="ChEBI" id="CHEBI:18420"/>
    </ligand>
</feature>
<feature type="binding site" evidence="1">
    <location>
        <position position="23"/>
    </location>
    <ligand>
        <name>Mg(2+)</name>
        <dbReference type="ChEBI" id="CHEBI:18420"/>
    </ligand>
</feature>
<feature type="binding site" evidence="1">
    <location>
        <position position="91"/>
    </location>
    <ligand>
        <name>ATP</name>
        <dbReference type="ChEBI" id="CHEBI:30616"/>
    </ligand>
</feature>
<feature type="binding site" evidence="1">
    <location>
        <position position="91"/>
    </location>
    <ligand>
        <name>CTP</name>
        <dbReference type="ChEBI" id="CHEBI:37563"/>
    </ligand>
</feature>
<feature type="binding site" evidence="1">
    <location>
        <position position="137"/>
    </location>
    <ligand>
        <name>ATP</name>
        <dbReference type="ChEBI" id="CHEBI:30616"/>
    </ligand>
</feature>
<feature type="binding site" evidence="1">
    <location>
        <position position="137"/>
    </location>
    <ligand>
        <name>CTP</name>
        <dbReference type="ChEBI" id="CHEBI:37563"/>
    </ligand>
</feature>
<feature type="binding site" evidence="1">
    <location>
        <position position="140"/>
    </location>
    <ligand>
        <name>ATP</name>
        <dbReference type="ChEBI" id="CHEBI:30616"/>
    </ligand>
</feature>
<feature type="binding site" evidence="1">
    <location>
        <position position="140"/>
    </location>
    <ligand>
        <name>CTP</name>
        <dbReference type="ChEBI" id="CHEBI:37563"/>
    </ligand>
</feature>
<comment type="function">
    <text evidence="1">Catalyzes the addition and repair of the essential 3'-terminal CCA sequence in tRNAs without using a nucleic acid template. Adds these three nucleotides in the order of C, C, and A to the tRNA nucleotide-73, using CTP and ATP as substrates and producing inorganic pyrophosphate. tRNA 3'-terminal CCA addition is required both for tRNA processing and repair. Also involved in tRNA surveillance by mediating tandem CCA addition to generate a CCACCA at the 3' terminus of unstable tRNAs. While stable tRNAs receive only 3'-terminal CCA, unstable tRNAs are marked with CCACCA and rapidly degraded.</text>
</comment>
<comment type="catalytic activity">
    <reaction evidence="1">
        <text>a tRNA precursor + 2 CTP + ATP = a tRNA with a 3' CCA end + 3 diphosphate</text>
        <dbReference type="Rhea" id="RHEA:14433"/>
        <dbReference type="Rhea" id="RHEA-COMP:10465"/>
        <dbReference type="Rhea" id="RHEA-COMP:10468"/>
        <dbReference type="ChEBI" id="CHEBI:30616"/>
        <dbReference type="ChEBI" id="CHEBI:33019"/>
        <dbReference type="ChEBI" id="CHEBI:37563"/>
        <dbReference type="ChEBI" id="CHEBI:74896"/>
        <dbReference type="ChEBI" id="CHEBI:83071"/>
        <dbReference type="EC" id="2.7.7.72"/>
    </reaction>
</comment>
<comment type="catalytic activity">
    <reaction evidence="1">
        <text>a tRNA with a 3' CCA end + 2 CTP + ATP = a tRNA with a 3' CCACCA end + 3 diphosphate</text>
        <dbReference type="Rhea" id="RHEA:76235"/>
        <dbReference type="Rhea" id="RHEA-COMP:10468"/>
        <dbReference type="Rhea" id="RHEA-COMP:18655"/>
        <dbReference type="ChEBI" id="CHEBI:30616"/>
        <dbReference type="ChEBI" id="CHEBI:33019"/>
        <dbReference type="ChEBI" id="CHEBI:37563"/>
        <dbReference type="ChEBI" id="CHEBI:83071"/>
        <dbReference type="ChEBI" id="CHEBI:195187"/>
    </reaction>
    <physiologicalReaction direction="left-to-right" evidence="1">
        <dbReference type="Rhea" id="RHEA:76236"/>
    </physiologicalReaction>
</comment>
<comment type="cofactor">
    <cofactor evidence="1">
        <name>Mg(2+)</name>
        <dbReference type="ChEBI" id="CHEBI:18420"/>
    </cofactor>
    <text evidence="1">Magnesium is required for nucleotidyltransferase activity.</text>
</comment>
<comment type="cofactor">
    <cofactor evidence="1">
        <name>Ni(2+)</name>
        <dbReference type="ChEBI" id="CHEBI:49786"/>
    </cofactor>
    <text evidence="1">Nickel for phosphatase activity.</text>
</comment>
<comment type="subunit">
    <text evidence="1">Monomer. Can also form homodimers and oligomers.</text>
</comment>
<comment type="domain">
    <text evidence="1">Comprises two domains: an N-terminal domain containing the nucleotidyltransferase activity and a C-terminal HD domain associated with both phosphodiesterase and phosphatase activities.</text>
</comment>
<comment type="miscellaneous">
    <text evidence="1">A single active site specifically recognizes both ATP and CTP and is responsible for their addition.</text>
</comment>
<comment type="similarity">
    <text evidence="1">Belongs to the tRNA nucleotidyltransferase/poly(A) polymerase family. Bacterial CCA-adding enzyme type 1 subfamily.</text>
</comment>
<accession>A3QBN1</accession>
<protein>
    <recommendedName>
        <fullName evidence="1">Multifunctional CCA protein</fullName>
    </recommendedName>
    <domain>
        <recommendedName>
            <fullName evidence="1">CCA-adding enzyme</fullName>
            <ecNumber evidence="1">2.7.7.72</ecNumber>
        </recommendedName>
        <alternativeName>
            <fullName evidence="1">CCA tRNA nucleotidyltransferase</fullName>
        </alternativeName>
        <alternativeName>
            <fullName evidence="1">tRNA CCA-pyrophosphorylase</fullName>
        </alternativeName>
        <alternativeName>
            <fullName evidence="1">tRNA adenylyl-/cytidylyl-transferase</fullName>
        </alternativeName>
        <alternativeName>
            <fullName evidence="1">tRNA nucleotidyltransferase</fullName>
        </alternativeName>
        <alternativeName>
            <fullName evidence="1">tRNA-NT</fullName>
        </alternativeName>
    </domain>
    <domain>
        <recommendedName>
            <fullName evidence="1">2'-nucleotidase</fullName>
            <ecNumber evidence="1">3.1.3.-</ecNumber>
        </recommendedName>
    </domain>
    <domain>
        <recommendedName>
            <fullName evidence="1">2',3'-cyclic phosphodiesterase</fullName>
            <ecNumber evidence="1">3.1.4.-</ecNumber>
        </recommendedName>
    </domain>
    <domain>
        <recommendedName>
            <fullName evidence="1">Phosphatase</fullName>
            <ecNumber evidence="1">3.1.3.-</ecNumber>
        </recommendedName>
    </domain>
</protein>
<name>CCA_SHELP</name>
<organism>
    <name type="scientific">Shewanella loihica (strain ATCC BAA-1088 / PV-4)</name>
    <dbReference type="NCBI Taxonomy" id="323850"/>
    <lineage>
        <taxon>Bacteria</taxon>
        <taxon>Pseudomonadati</taxon>
        <taxon>Pseudomonadota</taxon>
        <taxon>Gammaproteobacteria</taxon>
        <taxon>Alteromonadales</taxon>
        <taxon>Shewanellaceae</taxon>
        <taxon>Shewanella</taxon>
    </lineage>
</organism>
<keyword id="KW-0067">ATP-binding</keyword>
<keyword id="KW-0378">Hydrolase</keyword>
<keyword id="KW-0460">Magnesium</keyword>
<keyword id="KW-0479">Metal-binding</keyword>
<keyword id="KW-0511">Multifunctional enzyme</keyword>
<keyword id="KW-0533">Nickel</keyword>
<keyword id="KW-0547">Nucleotide-binding</keyword>
<keyword id="KW-0548">Nucleotidyltransferase</keyword>
<keyword id="KW-1185">Reference proteome</keyword>
<keyword id="KW-0692">RNA repair</keyword>
<keyword id="KW-0694">RNA-binding</keyword>
<keyword id="KW-0808">Transferase</keyword>
<keyword id="KW-0819">tRNA processing</keyword>
<evidence type="ECO:0000255" key="1">
    <source>
        <dbReference type="HAMAP-Rule" id="MF_01261"/>
    </source>
</evidence>
<reference key="1">
    <citation type="submission" date="2007-03" db="EMBL/GenBank/DDBJ databases">
        <title>Complete sequence of Shewanella loihica PV-4.</title>
        <authorList>
            <consortium name="US DOE Joint Genome Institute"/>
            <person name="Copeland A."/>
            <person name="Lucas S."/>
            <person name="Lapidus A."/>
            <person name="Barry K."/>
            <person name="Detter J.C."/>
            <person name="Glavina del Rio T."/>
            <person name="Hammon N."/>
            <person name="Israni S."/>
            <person name="Dalin E."/>
            <person name="Tice H."/>
            <person name="Pitluck S."/>
            <person name="Chain P."/>
            <person name="Malfatti S."/>
            <person name="Shin M."/>
            <person name="Vergez L."/>
            <person name="Schmutz J."/>
            <person name="Larimer F."/>
            <person name="Land M."/>
            <person name="Hauser L."/>
            <person name="Kyrpides N."/>
            <person name="Mikhailova N."/>
            <person name="Romine M.F."/>
            <person name="Serres G."/>
            <person name="Fredrickson J."/>
            <person name="Tiedje J."/>
            <person name="Richardson P."/>
        </authorList>
    </citation>
    <scope>NUCLEOTIDE SEQUENCE [LARGE SCALE GENOMIC DNA]</scope>
    <source>
        <strain>ATCC BAA-1088 / PV-4</strain>
    </source>
</reference>
<proteinExistence type="inferred from homology"/>
<gene>
    <name evidence="1" type="primary">cca</name>
    <name type="ordered locus">Shew_1008</name>
</gene>